<reference key="1">
    <citation type="journal article" date="2008" name="J. Bacteriol.">
        <title>Complete genome sequence of Neisseria gonorrhoeae NCCP11945.</title>
        <authorList>
            <person name="Chung G.T."/>
            <person name="Yoo J.S."/>
            <person name="Oh H.B."/>
            <person name="Lee Y.S."/>
            <person name="Cha S.H."/>
            <person name="Kim S.J."/>
            <person name="Yoo C.K."/>
        </authorList>
    </citation>
    <scope>NUCLEOTIDE SEQUENCE [LARGE SCALE GENOMIC DNA]</scope>
    <source>
        <strain>NCCP11945</strain>
    </source>
</reference>
<accession>B4RNG7</accession>
<keyword id="KW-0143">Chaperone</keyword>
<keyword id="KW-0963">Cytoplasm</keyword>
<keyword id="KW-0346">Stress response</keyword>
<evidence type="ECO:0000255" key="1">
    <source>
        <dbReference type="HAMAP-Rule" id="MF_01151"/>
    </source>
</evidence>
<feature type="chain" id="PRO_1000137586" description="Protein GrpE">
    <location>
        <begin position="1"/>
        <end position="192"/>
    </location>
</feature>
<protein>
    <recommendedName>
        <fullName evidence="1">Protein GrpE</fullName>
    </recommendedName>
    <alternativeName>
        <fullName evidence="1">HSP-70 cofactor</fullName>
    </alternativeName>
</protein>
<dbReference type="EMBL" id="CP001050">
    <property type="protein sequence ID" value="ACF30325.1"/>
    <property type="molecule type" value="Genomic_DNA"/>
</dbReference>
<dbReference type="RefSeq" id="WP_002214370.1">
    <property type="nucleotide sequence ID" value="NC_011035.1"/>
</dbReference>
<dbReference type="SMR" id="B4RNG7"/>
<dbReference type="GeneID" id="93386624"/>
<dbReference type="KEGG" id="ngk:NGK_1677"/>
<dbReference type="HOGENOM" id="CLU_057217_6_2_4"/>
<dbReference type="Proteomes" id="UP000002564">
    <property type="component" value="Chromosome"/>
</dbReference>
<dbReference type="GO" id="GO:0005829">
    <property type="term" value="C:cytosol"/>
    <property type="evidence" value="ECO:0007669"/>
    <property type="project" value="TreeGrafter"/>
</dbReference>
<dbReference type="GO" id="GO:0000774">
    <property type="term" value="F:adenyl-nucleotide exchange factor activity"/>
    <property type="evidence" value="ECO:0007669"/>
    <property type="project" value="InterPro"/>
</dbReference>
<dbReference type="GO" id="GO:0042803">
    <property type="term" value="F:protein homodimerization activity"/>
    <property type="evidence" value="ECO:0007669"/>
    <property type="project" value="InterPro"/>
</dbReference>
<dbReference type="GO" id="GO:0051087">
    <property type="term" value="F:protein-folding chaperone binding"/>
    <property type="evidence" value="ECO:0007669"/>
    <property type="project" value="InterPro"/>
</dbReference>
<dbReference type="GO" id="GO:0051082">
    <property type="term" value="F:unfolded protein binding"/>
    <property type="evidence" value="ECO:0007669"/>
    <property type="project" value="TreeGrafter"/>
</dbReference>
<dbReference type="GO" id="GO:0006457">
    <property type="term" value="P:protein folding"/>
    <property type="evidence" value="ECO:0007669"/>
    <property type="project" value="InterPro"/>
</dbReference>
<dbReference type="CDD" id="cd00446">
    <property type="entry name" value="GrpE"/>
    <property type="match status" value="1"/>
</dbReference>
<dbReference type="FunFam" id="2.30.22.10:FF:000001">
    <property type="entry name" value="Protein GrpE"/>
    <property type="match status" value="1"/>
</dbReference>
<dbReference type="Gene3D" id="3.90.20.20">
    <property type="match status" value="1"/>
</dbReference>
<dbReference type="Gene3D" id="2.30.22.10">
    <property type="entry name" value="Head domain of nucleotide exchange factor GrpE"/>
    <property type="match status" value="1"/>
</dbReference>
<dbReference type="HAMAP" id="MF_01151">
    <property type="entry name" value="GrpE"/>
    <property type="match status" value="1"/>
</dbReference>
<dbReference type="InterPro" id="IPR000740">
    <property type="entry name" value="GrpE"/>
</dbReference>
<dbReference type="InterPro" id="IPR013805">
    <property type="entry name" value="GrpE_coiled_coil"/>
</dbReference>
<dbReference type="InterPro" id="IPR009012">
    <property type="entry name" value="GrpE_head"/>
</dbReference>
<dbReference type="NCBIfam" id="NF010737">
    <property type="entry name" value="PRK14139.1"/>
    <property type="match status" value="1"/>
</dbReference>
<dbReference type="NCBIfam" id="NF010738">
    <property type="entry name" value="PRK14140.1"/>
    <property type="match status" value="1"/>
</dbReference>
<dbReference type="PANTHER" id="PTHR21237">
    <property type="entry name" value="GRPE PROTEIN"/>
    <property type="match status" value="1"/>
</dbReference>
<dbReference type="PANTHER" id="PTHR21237:SF23">
    <property type="entry name" value="GRPE PROTEIN HOMOLOG, MITOCHONDRIAL"/>
    <property type="match status" value="1"/>
</dbReference>
<dbReference type="Pfam" id="PF01025">
    <property type="entry name" value="GrpE"/>
    <property type="match status" value="1"/>
</dbReference>
<dbReference type="PRINTS" id="PR00773">
    <property type="entry name" value="GRPEPROTEIN"/>
</dbReference>
<dbReference type="SUPFAM" id="SSF58014">
    <property type="entry name" value="Coiled-coil domain of nucleotide exchange factor GrpE"/>
    <property type="match status" value="1"/>
</dbReference>
<dbReference type="SUPFAM" id="SSF51064">
    <property type="entry name" value="Head domain of nucleotide exchange factor GrpE"/>
    <property type="match status" value="1"/>
</dbReference>
<dbReference type="PROSITE" id="PS01071">
    <property type="entry name" value="GRPE"/>
    <property type="match status" value="1"/>
</dbReference>
<name>GRPE_NEIG2</name>
<comment type="function">
    <text evidence="1">Participates actively in the response to hyperosmotic and heat shock by preventing the aggregation of stress-denatured proteins, in association with DnaK and GrpE. It is the nucleotide exchange factor for DnaK and may function as a thermosensor. Unfolded proteins bind initially to DnaJ; upon interaction with the DnaJ-bound protein, DnaK hydrolyzes its bound ATP, resulting in the formation of a stable complex. GrpE releases ADP from DnaK; ATP binding to DnaK triggers the release of the substrate protein, thus completing the reaction cycle. Several rounds of ATP-dependent interactions between DnaJ, DnaK and GrpE are required for fully efficient folding.</text>
</comment>
<comment type="subunit">
    <text evidence="1">Homodimer.</text>
</comment>
<comment type="subcellular location">
    <subcellularLocation>
        <location evidence="1">Cytoplasm</location>
    </subcellularLocation>
</comment>
<comment type="similarity">
    <text evidence="1">Belongs to the GrpE family.</text>
</comment>
<organism>
    <name type="scientific">Neisseria gonorrhoeae (strain NCCP11945)</name>
    <dbReference type="NCBI Taxonomy" id="521006"/>
    <lineage>
        <taxon>Bacteria</taxon>
        <taxon>Pseudomonadati</taxon>
        <taxon>Pseudomonadota</taxon>
        <taxon>Betaproteobacteria</taxon>
        <taxon>Neisseriales</taxon>
        <taxon>Neisseriaceae</taxon>
        <taxon>Neisseria</taxon>
    </lineage>
</organism>
<gene>
    <name evidence="1" type="primary">grpE</name>
    <name type="ordered locus">NGK_1677</name>
</gene>
<proteinExistence type="inferred from homology"/>
<sequence>MSEQTQQQNSEEAVENVEAVETVETVGNADGVQEQAAAEPAYEDLQARIAELEAQLKDEQLRALANEQNLRRRHQQEIADTHKFAGQKFAVEMLPVKDYLEMALLDQSGNFDALKMGVQMTLNELQKAFDATQIKEINPKAGDKLDPNIHQAMQAVASEQEPNTVVGVMKKGYTLSDRVLRPAMVTVAQKEA</sequence>